<gene>
    <name evidence="1" type="primary">nuoD</name>
    <name type="ordered locus">Meso_1025</name>
</gene>
<name>NUOD_CHESB</name>
<dbReference type="EC" id="7.1.1.-" evidence="1"/>
<dbReference type="EMBL" id="CP000390">
    <property type="protein sequence ID" value="ABG62422.1"/>
    <property type="molecule type" value="Genomic_DNA"/>
</dbReference>
<dbReference type="SMR" id="Q11JK3"/>
<dbReference type="STRING" id="266779.Meso_1025"/>
<dbReference type="KEGG" id="mes:Meso_1025"/>
<dbReference type="eggNOG" id="COG0649">
    <property type="taxonomic scope" value="Bacteria"/>
</dbReference>
<dbReference type="HOGENOM" id="CLU_015134_1_1_5"/>
<dbReference type="OrthoDB" id="9801496at2"/>
<dbReference type="GO" id="GO:0005886">
    <property type="term" value="C:plasma membrane"/>
    <property type="evidence" value="ECO:0007669"/>
    <property type="project" value="UniProtKB-SubCell"/>
</dbReference>
<dbReference type="GO" id="GO:0051287">
    <property type="term" value="F:NAD binding"/>
    <property type="evidence" value="ECO:0007669"/>
    <property type="project" value="InterPro"/>
</dbReference>
<dbReference type="GO" id="GO:0050136">
    <property type="term" value="F:NADH:ubiquinone reductase (non-electrogenic) activity"/>
    <property type="evidence" value="ECO:0007669"/>
    <property type="project" value="UniProtKB-UniRule"/>
</dbReference>
<dbReference type="GO" id="GO:0048038">
    <property type="term" value="F:quinone binding"/>
    <property type="evidence" value="ECO:0007669"/>
    <property type="project" value="UniProtKB-KW"/>
</dbReference>
<dbReference type="FunFam" id="1.10.645.10:FF:000005">
    <property type="entry name" value="NADH-quinone oxidoreductase subunit D"/>
    <property type="match status" value="1"/>
</dbReference>
<dbReference type="Gene3D" id="1.10.645.10">
    <property type="entry name" value="Cytochrome-c3 Hydrogenase, chain B"/>
    <property type="match status" value="1"/>
</dbReference>
<dbReference type="HAMAP" id="MF_01358">
    <property type="entry name" value="NDH1_NuoD"/>
    <property type="match status" value="1"/>
</dbReference>
<dbReference type="InterPro" id="IPR001135">
    <property type="entry name" value="NADH_Q_OxRdtase_suD"/>
</dbReference>
<dbReference type="InterPro" id="IPR014029">
    <property type="entry name" value="NADH_UbQ_OxRdtase_49kDa_CS"/>
</dbReference>
<dbReference type="InterPro" id="IPR022885">
    <property type="entry name" value="NDH1_su_D/H"/>
</dbReference>
<dbReference type="InterPro" id="IPR029014">
    <property type="entry name" value="NiFe-Hase_large"/>
</dbReference>
<dbReference type="NCBIfam" id="TIGR01962">
    <property type="entry name" value="NuoD"/>
    <property type="match status" value="1"/>
</dbReference>
<dbReference type="NCBIfam" id="NF004739">
    <property type="entry name" value="PRK06075.1"/>
    <property type="match status" value="1"/>
</dbReference>
<dbReference type="PANTHER" id="PTHR11993:SF10">
    <property type="entry name" value="NADH DEHYDROGENASE [UBIQUINONE] IRON-SULFUR PROTEIN 2, MITOCHONDRIAL"/>
    <property type="match status" value="1"/>
</dbReference>
<dbReference type="PANTHER" id="PTHR11993">
    <property type="entry name" value="NADH-UBIQUINONE OXIDOREDUCTASE 49 KDA SUBUNIT"/>
    <property type="match status" value="1"/>
</dbReference>
<dbReference type="Pfam" id="PF00346">
    <property type="entry name" value="Complex1_49kDa"/>
    <property type="match status" value="1"/>
</dbReference>
<dbReference type="SUPFAM" id="SSF56762">
    <property type="entry name" value="HydB/Nqo4-like"/>
    <property type="match status" value="1"/>
</dbReference>
<dbReference type="PROSITE" id="PS00535">
    <property type="entry name" value="COMPLEX1_49K"/>
    <property type="match status" value="1"/>
</dbReference>
<feature type="chain" id="PRO_0000357844" description="NADH-quinone oxidoreductase subunit D">
    <location>
        <begin position="1"/>
        <end position="396"/>
    </location>
</feature>
<protein>
    <recommendedName>
        <fullName evidence="1">NADH-quinone oxidoreductase subunit D</fullName>
        <ecNumber evidence="1">7.1.1.-</ecNumber>
    </recommendedName>
    <alternativeName>
        <fullName evidence="1">NADH dehydrogenase I subunit D</fullName>
    </alternativeName>
    <alternativeName>
        <fullName evidence="1">NDH-1 subunit D</fullName>
    </alternativeName>
</protein>
<reference key="1">
    <citation type="submission" date="2006-06" db="EMBL/GenBank/DDBJ databases">
        <title>Complete sequence of chromosome of Mesorhizobium sp. BNC1.</title>
        <authorList>
            <consortium name="US DOE Joint Genome Institute"/>
            <person name="Copeland A."/>
            <person name="Lucas S."/>
            <person name="Lapidus A."/>
            <person name="Barry K."/>
            <person name="Detter J.C."/>
            <person name="Glavina del Rio T."/>
            <person name="Hammon N."/>
            <person name="Israni S."/>
            <person name="Dalin E."/>
            <person name="Tice H."/>
            <person name="Pitluck S."/>
            <person name="Chertkov O."/>
            <person name="Brettin T."/>
            <person name="Bruce D."/>
            <person name="Han C."/>
            <person name="Tapia R."/>
            <person name="Gilna P."/>
            <person name="Schmutz J."/>
            <person name="Larimer F."/>
            <person name="Land M."/>
            <person name="Hauser L."/>
            <person name="Kyrpides N."/>
            <person name="Mikhailova N."/>
            <person name="Richardson P."/>
        </authorList>
    </citation>
    <scope>NUCLEOTIDE SEQUENCE [LARGE SCALE GENOMIC DNA]</scope>
    <source>
        <strain>BNC1</strain>
    </source>
</reference>
<proteinExistence type="inferred from homology"/>
<organism>
    <name type="scientific">Chelativorans sp. (strain BNC1)</name>
    <dbReference type="NCBI Taxonomy" id="266779"/>
    <lineage>
        <taxon>Bacteria</taxon>
        <taxon>Pseudomonadati</taxon>
        <taxon>Pseudomonadota</taxon>
        <taxon>Alphaproteobacteria</taxon>
        <taxon>Hyphomicrobiales</taxon>
        <taxon>Phyllobacteriaceae</taxon>
        <taxon>Chelativorans</taxon>
    </lineage>
</organism>
<comment type="function">
    <text evidence="1">NDH-1 shuttles electrons from NADH, via FMN and iron-sulfur (Fe-S) centers, to quinones in the respiratory chain. The immediate electron acceptor for the enzyme in this species is believed to be ubiquinone. Couples the redox reaction to proton translocation (for every two electrons transferred, four hydrogen ions are translocated across the cytoplasmic membrane), and thus conserves the redox energy in a proton gradient.</text>
</comment>
<comment type="catalytic activity">
    <reaction evidence="1">
        <text>a quinone + NADH + 5 H(+)(in) = a quinol + NAD(+) + 4 H(+)(out)</text>
        <dbReference type="Rhea" id="RHEA:57888"/>
        <dbReference type="ChEBI" id="CHEBI:15378"/>
        <dbReference type="ChEBI" id="CHEBI:24646"/>
        <dbReference type="ChEBI" id="CHEBI:57540"/>
        <dbReference type="ChEBI" id="CHEBI:57945"/>
        <dbReference type="ChEBI" id="CHEBI:132124"/>
    </reaction>
</comment>
<comment type="subunit">
    <text evidence="1">NDH-1 is composed of 14 different subunits. Subunits NuoB, C, D, E, F, and G constitute the peripheral sector of the complex.</text>
</comment>
<comment type="subcellular location">
    <subcellularLocation>
        <location evidence="1">Cell inner membrane</location>
        <topology evidence="1">Peripheral membrane protein</topology>
        <orientation evidence="1">Cytoplasmic side</orientation>
    </subcellularLocation>
</comment>
<comment type="similarity">
    <text evidence="1">Belongs to the complex I 49 kDa subunit family.</text>
</comment>
<accession>Q11JK3</accession>
<keyword id="KW-0997">Cell inner membrane</keyword>
<keyword id="KW-1003">Cell membrane</keyword>
<keyword id="KW-0472">Membrane</keyword>
<keyword id="KW-0520">NAD</keyword>
<keyword id="KW-0874">Quinone</keyword>
<keyword id="KW-1278">Translocase</keyword>
<keyword id="KW-0813">Transport</keyword>
<keyword id="KW-0830">Ubiquinone</keyword>
<sequence length="396" mass="44906">MAETSIRNFNINFGPQHPAAHGVLRLVLELDGEVVERVDPHIGLLHRGTEKLIEYKTYLQAIPYFDRLDYVAPMNQEHAFALAIERLLGIDVPIRGQLIRVLYSEISRILNHLLNITTQAMDVGALTPPLWGFEEREKLMVFYERASGARMHAAYFRPGGVHQDLPEKLVEDIGKWIDPFLKTVDDLDELLTENRIFKQRNADIGIVSLEDAWAWGFSGVMVRGSGAAWDLRKSQPYECYPEMDFDIPVGKNGDCYDRYLIRMEEMRQSAKIMRQCVERLLGKERVGPVSNMDGKVVPPKRAAMKRSMESLIHHFKLYTEGYHVPAGEVYAAVEAPKGEFGVYLVADGTNKPYRCKLRAPGFAHLQAMDFMCRGHLLADVTAVLGSLDIVFGEVDR</sequence>
<evidence type="ECO:0000255" key="1">
    <source>
        <dbReference type="HAMAP-Rule" id="MF_01358"/>
    </source>
</evidence>